<feature type="chain" id="PRO_0000450060" description="FAD-dependent monooxygenase pynG">
    <location>
        <begin position="1"/>
        <end position="432"/>
    </location>
</feature>
<feature type="binding site" evidence="2">
    <location>
        <position position="32"/>
    </location>
    <ligand>
        <name>FAD</name>
        <dbReference type="ChEBI" id="CHEBI:57692"/>
    </ligand>
</feature>
<feature type="binding site" evidence="2">
    <location>
        <position position="103"/>
    </location>
    <ligand>
        <name>FAD</name>
        <dbReference type="ChEBI" id="CHEBI:57692"/>
    </ligand>
</feature>
<feature type="binding site" evidence="2">
    <location>
        <position position="315"/>
    </location>
    <ligand>
        <name>FAD</name>
        <dbReference type="ChEBI" id="CHEBI:57692"/>
    </ligand>
</feature>
<feature type="binding site" evidence="2">
    <location>
        <position position="328"/>
    </location>
    <ligand>
        <name>FAD</name>
        <dbReference type="ChEBI" id="CHEBI:57692"/>
    </ligand>
</feature>
<keyword id="KW-0274">FAD</keyword>
<keyword id="KW-0285">Flavoprotein</keyword>
<keyword id="KW-0503">Monooxygenase</keyword>
<keyword id="KW-0560">Oxidoreductase</keyword>
<keyword id="KW-1185">Reference proteome</keyword>
<dbReference type="EC" id="1.-.-.-" evidence="4"/>
<dbReference type="EMBL" id="AM270218">
    <property type="protein sequence ID" value="CAK48263.1"/>
    <property type="molecule type" value="Genomic_DNA"/>
</dbReference>
<dbReference type="RefSeq" id="XP_001394034.1">
    <property type="nucleotide sequence ID" value="XM_001393997.1"/>
</dbReference>
<dbReference type="SMR" id="A5ABG5"/>
<dbReference type="EnsemblFungi" id="CAK48263">
    <property type="protein sequence ID" value="CAK48263"/>
    <property type="gene ID" value="An11g00300"/>
</dbReference>
<dbReference type="GeneID" id="4984253"/>
<dbReference type="KEGG" id="ang:An11g00300"/>
<dbReference type="VEuPathDB" id="FungiDB:An11g00300"/>
<dbReference type="HOGENOM" id="CLU_009665_19_5_1"/>
<dbReference type="Proteomes" id="UP000006706">
    <property type="component" value="Chromosome 7R"/>
</dbReference>
<dbReference type="GO" id="GO:0071949">
    <property type="term" value="F:FAD binding"/>
    <property type="evidence" value="ECO:0007669"/>
    <property type="project" value="InterPro"/>
</dbReference>
<dbReference type="GO" id="GO:0004497">
    <property type="term" value="F:monooxygenase activity"/>
    <property type="evidence" value="ECO:0007669"/>
    <property type="project" value="UniProtKB-KW"/>
</dbReference>
<dbReference type="GO" id="GO:0019748">
    <property type="term" value="P:secondary metabolic process"/>
    <property type="evidence" value="ECO:0000317"/>
    <property type="project" value="AspGD"/>
</dbReference>
<dbReference type="FunFam" id="3.50.50.60:FF:000469">
    <property type="entry name" value="FAD/NAD(P)-binding domain-containing protein"/>
    <property type="match status" value="1"/>
</dbReference>
<dbReference type="Gene3D" id="3.50.50.60">
    <property type="entry name" value="FAD/NAD(P)-binding domain"/>
    <property type="match status" value="1"/>
</dbReference>
<dbReference type="InterPro" id="IPR002938">
    <property type="entry name" value="FAD-bd"/>
</dbReference>
<dbReference type="InterPro" id="IPR050493">
    <property type="entry name" value="FAD-dep_Monooxygenase_BioMet"/>
</dbReference>
<dbReference type="InterPro" id="IPR036188">
    <property type="entry name" value="FAD/NAD-bd_sf"/>
</dbReference>
<dbReference type="PANTHER" id="PTHR13789">
    <property type="entry name" value="MONOOXYGENASE"/>
    <property type="match status" value="1"/>
</dbReference>
<dbReference type="PANTHER" id="PTHR13789:SF309">
    <property type="entry name" value="PUTATIVE (AFU_ORTHOLOGUE AFUA_6G14510)-RELATED"/>
    <property type="match status" value="1"/>
</dbReference>
<dbReference type="Pfam" id="PF01494">
    <property type="entry name" value="FAD_binding_3"/>
    <property type="match status" value="1"/>
</dbReference>
<dbReference type="PRINTS" id="PR00420">
    <property type="entry name" value="RNGMNOXGNASE"/>
</dbReference>
<dbReference type="SUPFAM" id="SSF51905">
    <property type="entry name" value="FAD/NAD(P)-binding domain"/>
    <property type="match status" value="1"/>
</dbReference>
<reference key="1">
    <citation type="journal article" date="2007" name="Nat. Biotechnol.">
        <title>Genome sequencing and analysis of the versatile cell factory Aspergillus niger CBS 513.88.</title>
        <authorList>
            <person name="Pel H.J."/>
            <person name="de Winde J.H."/>
            <person name="Archer D.B."/>
            <person name="Dyer P.S."/>
            <person name="Hofmann G."/>
            <person name="Schaap P.J."/>
            <person name="Turner G."/>
            <person name="de Vries R.P."/>
            <person name="Albang R."/>
            <person name="Albermann K."/>
            <person name="Andersen M.R."/>
            <person name="Bendtsen J.D."/>
            <person name="Benen J.A.E."/>
            <person name="van den Berg M."/>
            <person name="Breestraat S."/>
            <person name="Caddick M.X."/>
            <person name="Contreras R."/>
            <person name="Cornell M."/>
            <person name="Coutinho P.M."/>
            <person name="Danchin E.G.J."/>
            <person name="Debets A.J.M."/>
            <person name="Dekker P."/>
            <person name="van Dijck P.W.M."/>
            <person name="van Dijk A."/>
            <person name="Dijkhuizen L."/>
            <person name="Driessen A.J.M."/>
            <person name="d'Enfert C."/>
            <person name="Geysens S."/>
            <person name="Goosen C."/>
            <person name="Groot G.S.P."/>
            <person name="de Groot P.W.J."/>
            <person name="Guillemette T."/>
            <person name="Henrissat B."/>
            <person name="Herweijer M."/>
            <person name="van den Hombergh J.P.T.W."/>
            <person name="van den Hondel C.A.M.J.J."/>
            <person name="van der Heijden R.T.J.M."/>
            <person name="van der Kaaij R.M."/>
            <person name="Klis F.M."/>
            <person name="Kools H.J."/>
            <person name="Kubicek C.P."/>
            <person name="van Kuyk P.A."/>
            <person name="Lauber J."/>
            <person name="Lu X."/>
            <person name="van der Maarel M.J.E.C."/>
            <person name="Meulenberg R."/>
            <person name="Menke H."/>
            <person name="Mortimer M.A."/>
            <person name="Nielsen J."/>
            <person name="Oliver S.G."/>
            <person name="Olsthoorn M."/>
            <person name="Pal K."/>
            <person name="van Peij N.N.M.E."/>
            <person name="Ram A.F.J."/>
            <person name="Rinas U."/>
            <person name="Roubos J.A."/>
            <person name="Sagt C.M.J."/>
            <person name="Schmoll M."/>
            <person name="Sun J."/>
            <person name="Ussery D."/>
            <person name="Varga J."/>
            <person name="Vervecken W."/>
            <person name="van de Vondervoort P.J.J."/>
            <person name="Wedler H."/>
            <person name="Woesten H.A.B."/>
            <person name="Zeng A.-P."/>
            <person name="van Ooyen A.J.J."/>
            <person name="Visser J."/>
            <person name="Stam H."/>
        </authorList>
    </citation>
    <scope>NUCLEOTIDE SEQUENCE [LARGE SCALE GENOMIC DNA]</scope>
    <source>
        <strain>ATCC MYA-4892 / CBS 513.88 / FGSC A1513</strain>
    </source>
</reference>
<reference key="2">
    <citation type="journal article" date="2013" name="ChemBioChem">
        <title>Pyranonigrin E: a PKS-NRPS hybrid metabolite from Aspergillus niger identified by genome mining.</title>
        <authorList>
            <person name="Awakawa T."/>
            <person name="Yang X.L."/>
            <person name="Wakimoto T."/>
            <person name="Abe I."/>
        </authorList>
    </citation>
    <scope>FUNCTION</scope>
</reference>
<reference key="3">
    <citation type="journal article" date="2015" name="Org. Lett.">
        <title>Elucidation of pyranonigrin biosynthetic pathway reveals a mode of tetramic acid, fused gamma-pyrone, and exo-methylene formation.</title>
        <authorList>
            <person name="Yamamoto T."/>
            <person name="Tsunematsu Y."/>
            <person name="Noguchi H."/>
            <person name="Hotta K."/>
            <person name="Watanabe K."/>
        </authorList>
    </citation>
    <scope>FUNCTION</scope>
    <scope>DISRUPTION PHENOTYPE</scope>
    <scope>CATALYTIC ACTIVITY</scope>
    <scope>PATHWAY</scope>
</reference>
<proteinExistence type="evidence at protein level"/>
<comment type="function">
    <text evidence="3 4 7">FAD-dependent monooxygenase; part of the gene cluster that mediates the biosynthesis of pyranonigrins, a family of antioxidative compounds (PubMed:24106156). The first step of pyranonigrins biosynthesis is performed by the hybrid PKS-NRPS synthetase that condenses 6 malonyl-CoA units to an acetyl starter unit, to form a 1,3,5-trioxotetradecane-6,8-dienyl-ACP (PubMed:24106156). The enoyl reductase (ER) domain of pynA is likely to be functional during the first two rounds of polyketide chain extension, to generate the saturated C-C bonds of the alkyl side chain (Probable). PynA subsequently forms the amide bond between the acyl chain and L-serine (PubMed:24106156, PubMed:26414728). Although pynA has a terminal reductase domain, it appears to require the thioesterase pynI for the release of the straight-chain intermediate from pynA via the formation of a tetramic acid pyranonigrin J (PubMed:26414728). The methyltransferase pynC then coverts pyranonigrin J to pyranonigrin I via N-methylation (PubMed:26414728). The FAD-dependent monooxygenase pynG catalyzes an epoxidation-mediated cyclization to form the dihydro-gamma-pyrone moiety, followed by pynD-catalyzed oxidation of the alcohol to the ketone and enolization to yield the characteristic tetramic acid-fused gamma-pyrone core of pyranonigrin H (PubMed:26414728). Pyranonigrin H is substrate of pynH for dehydration-mediated exo-methylene formation from the serine side chain to produce pyranonigrin E, before the oxidase pynE reduces the exo-methylene of pyranonigrin E into a pendant methyl to form pyranonigrin G (PubMed:26414728). The FAD-linked oxidoreductase pynB performs the reverse reaction and converts pyranonigrin G back to pyranonigrin E (PubMed:26414728).</text>
</comment>
<comment type="cofactor">
    <cofactor evidence="1">
        <name>FAD</name>
        <dbReference type="ChEBI" id="CHEBI:57692"/>
    </cofactor>
</comment>
<comment type="pathway">
    <text evidence="4">Secondary metabolite biosynthesis.</text>
</comment>
<comment type="disruption phenotype">
    <text evidence="4">Leads to the accumulation of pyranonigrin I.</text>
</comment>
<comment type="similarity">
    <text evidence="6">Belongs to the paxM FAD-dependent monooxygenase family.</text>
</comment>
<name>PYNG_ASPNC</name>
<accession>A5ABG5</accession>
<evidence type="ECO:0000250" key="1">
    <source>
        <dbReference type="UniProtKB" id="A6T923"/>
    </source>
</evidence>
<evidence type="ECO:0000250" key="2">
    <source>
        <dbReference type="UniProtKB" id="B8M9J8"/>
    </source>
</evidence>
<evidence type="ECO:0000269" key="3">
    <source>
    </source>
</evidence>
<evidence type="ECO:0000269" key="4">
    <source>
    </source>
</evidence>
<evidence type="ECO:0000303" key="5">
    <source>
    </source>
</evidence>
<evidence type="ECO:0000305" key="6"/>
<evidence type="ECO:0000305" key="7">
    <source>
    </source>
</evidence>
<organism>
    <name type="scientific">Aspergillus niger (strain ATCC MYA-4892 / CBS 513.88 / FGSC A1513)</name>
    <dbReference type="NCBI Taxonomy" id="425011"/>
    <lineage>
        <taxon>Eukaryota</taxon>
        <taxon>Fungi</taxon>
        <taxon>Dikarya</taxon>
        <taxon>Ascomycota</taxon>
        <taxon>Pezizomycotina</taxon>
        <taxon>Eurotiomycetes</taxon>
        <taxon>Eurotiomycetidae</taxon>
        <taxon>Eurotiales</taxon>
        <taxon>Aspergillaceae</taxon>
        <taxon>Aspergillus</taxon>
        <taxon>Aspergillus subgen. Circumdati</taxon>
    </lineage>
</organism>
<protein>
    <recommendedName>
        <fullName evidence="5">FAD-dependent monooxygenase pynG</fullName>
        <ecNumber evidence="4">1.-.-.-</ecNumber>
    </recommendedName>
    <alternativeName>
        <fullName evidence="5">Pyranonigrin biosynthesis cluster protein G</fullName>
    </alternativeName>
</protein>
<sequence length="432" mass="48166">MSTQVLIVGGGIGGLTLAAMCRRIGVSCRVLERSAALEPVGAGISLAPNALRALDQIGLYDYVRQEGQPVRKIRVYRNQTQWSEIDFQWLERTFGYPVYSIERHGFHRRLYDAAGGSETVNLGAEVAKVIPPQEEAEGVSVVLKDGRRYTGNVLVGADGVRSVVRRALMATINSPPGQSGAVGEDEDAADVIQFTGRVHLSGYTHPLDHLGPADEGIAYWMLYDRSILTTWPCRDHRQWFVGAVPSKLKDPNRSVWKHADHNTINQVYGSEYHPFAPDFHFRDVVKHAERVVASDVFHQTTFPPMAAGRIAMLGDASHAMTSFFGQGACQAIEDATELASALGMIDVRPTDAETILQGYRHSRERRGRDLVVFSDRFALLHTGRLLGSWGPFVRQMVYTWMPLWGWKWALQWLYGHQPTLVEQRNEAAKKTA</sequence>
<gene>
    <name evidence="5" type="primary">pynG</name>
    <name type="ORF">An11g00300</name>
</gene>